<sequence>MSSRPVFLSAADVQDHLRSSSLLIAPLETALANFSSGPDGGVVQPVRTVVPVAKHRGFLGVMPAYSAAEDALTTKLVTFYEDHSATSTVPSHQATVLLFQPSNGSLLAVMDGNVITAKRTAAVSAIATKFLKPPNSEVLCILGAGVQAYSHYEVFTEQFFFKEVRIWNRTKENAEKFVNTVPGEVRICSSVQEAVTGADVIITVTMATEPILFGEWVKPGAHINAIGASRPDWRELDDELMKQAVLYVDSQEAALKESGDVLLSGAEIFAELGEVVKGVKPAHCEKTTVFKSLGMAVEDMVAAKLVYDSWSSGK</sequence>
<feature type="chain" id="PRO_0000328261" description="Ketimine reductase mu-crystallin">
    <location>
        <begin position="1"/>
        <end position="313"/>
    </location>
</feature>
<feature type="binding site" evidence="1">
    <location>
        <position position="47"/>
    </location>
    <ligand>
        <name>3,3',5-triiodo-L-thyronine</name>
        <dbReference type="ChEBI" id="CHEBI:533015"/>
    </ligand>
</feature>
<feature type="binding site" evidence="1">
    <location>
        <position position="91"/>
    </location>
    <ligand>
        <name>NADPH</name>
        <dbReference type="ChEBI" id="CHEBI:57783"/>
    </ligand>
</feature>
<feature type="binding site" evidence="1">
    <location>
        <position position="92"/>
    </location>
    <ligand>
        <name>NADPH</name>
        <dbReference type="ChEBI" id="CHEBI:57783"/>
    </ligand>
</feature>
<feature type="binding site" evidence="1">
    <location>
        <position position="119"/>
    </location>
    <ligand>
        <name>NADPH</name>
        <dbReference type="ChEBI" id="CHEBI:57783"/>
    </ligand>
</feature>
<feature type="binding site" evidence="1">
    <location>
        <position position="144"/>
    </location>
    <ligand>
        <name>NADPH</name>
        <dbReference type="ChEBI" id="CHEBI:57783"/>
    </ligand>
</feature>
<feature type="binding site" evidence="1">
    <location>
        <position position="146"/>
    </location>
    <ligand>
        <name>NADPH</name>
        <dbReference type="ChEBI" id="CHEBI:57783"/>
    </ligand>
</feature>
<feature type="binding site" evidence="1">
    <location>
        <position position="147"/>
    </location>
    <ligand>
        <name>NADPH</name>
        <dbReference type="ChEBI" id="CHEBI:57783"/>
    </ligand>
</feature>
<feature type="binding site" evidence="1">
    <location>
        <position position="168"/>
    </location>
    <ligand>
        <name>NADPH</name>
        <dbReference type="ChEBI" id="CHEBI:57783"/>
    </ligand>
</feature>
<feature type="binding site" evidence="1">
    <location>
        <position position="169"/>
    </location>
    <ligand>
        <name>NADPH</name>
        <dbReference type="ChEBI" id="CHEBI:57783"/>
    </ligand>
</feature>
<feature type="binding site" evidence="1">
    <location>
        <position position="170"/>
    </location>
    <ligand>
        <name>NADPH</name>
        <dbReference type="ChEBI" id="CHEBI:57783"/>
    </ligand>
</feature>
<feature type="binding site" evidence="1">
    <location>
        <position position="173"/>
    </location>
    <ligand>
        <name>NADPH</name>
        <dbReference type="ChEBI" id="CHEBI:57783"/>
    </ligand>
</feature>
<feature type="binding site" evidence="1">
    <location>
        <position position="205"/>
    </location>
    <ligand>
        <name>NADPH</name>
        <dbReference type="ChEBI" id="CHEBI:57783"/>
    </ligand>
</feature>
<feature type="binding site" evidence="1">
    <location>
        <position position="206"/>
    </location>
    <ligand>
        <name>NADPH</name>
        <dbReference type="ChEBI" id="CHEBI:57783"/>
    </ligand>
</feature>
<feature type="binding site" evidence="1">
    <location>
        <position position="257"/>
    </location>
    <ligand>
        <name>3,3',5-triiodo-L-thyronine</name>
        <dbReference type="ChEBI" id="CHEBI:533015"/>
    </ligand>
</feature>
<feature type="binding site" evidence="1">
    <location>
        <position position="292"/>
    </location>
    <ligand>
        <name>NADPH</name>
        <dbReference type="ChEBI" id="CHEBI:57783"/>
    </ligand>
</feature>
<organism>
    <name type="scientific">Bos taurus</name>
    <name type="common">Bovine</name>
    <dbReference type="NCBI Taxonomy" id="9913"/>
    <lineage>
        <taxon>Eukaryota</taxon>
        <taxon>Metazoa</taxon>
        <taxon>Chordata</taxon>
        <taxon>Craniata</taxon>
        <taxon>Vertebrata</taxon>
        <taxon>Euteleostomi</taxon>
        <taxon>Mammalia</taxon>
        <taxon>Eutheria</taxon>
        <taxon>Laurasiatheria</taxon>
        <taxon>Artiodactyla</taxon>
        <taxon>Ruminantia</taxon>
        <taxon>Pecora</taxon>
        <taxon>Bovidae</taxon>
        <taxon>Bovinae</taxon>
        <taxon>Bos</taxon>
    </lineage>
</organism>
<protein>
    <recommendedName>
        <fullName evidence="2">Ketimine reductase mu-crystallin</fullName>
        <ecNumber evidence="3">1.5.1.25</ecNumber>
    </recommendedName>
    <alternativeName>
        <fullName evidence="2">1-piperideine-2-carboxylate/1-pyrroline-2-carboxylate reductase</fullName>
        <shortName evidence="2">P2C/Pyr2C reductase</shortName>
        <ecNumber evidence="3">1.5.1.1</ecNumber>
    </alternativeName>
    <alternativeName>
        <fullName evidence="2">NADP-regulated thyroid-hormone-binding protein</fullName>
    </alternativeName>
</protein>
<dbReference type="EC" id="1.5.1.25" evidence="3"/>
<dbReference type="EC" id="1.5.1.1" evidence="3"/>
<dbReference type="EMBL" id="BC112846">
    <property type="protein sequence ID" value="AAI12847.1"/>
    <property type="molecule type" value="mRNA"/>
</dbReference>
<dbReference type="RefSeq" id="NP_001039379.1">
    <property type="nucleotide sequence ID" value="NM_001045914.2"/>
</dbReference>
<dbReference type="SMR" id="Q2KHX6"/>
<dbReference type="FunCoup" id="Q2KHX6">
    <property type="interactions" value="57"/>
</dbReference>
<dbReference type="STRING" id="9913.ENSBTAP00000012972"/>
<dbReference type="PaxDb" id="9913-ENSBTAP00000012972"/>
<dbReference type="GeneID" id="505167"/>
<dbReference type="KEGG" id="bta:505167"/>
<dbReference type="CTD" id="1428"/>
<dbReference type="VEuPathDB" id="HostDB:ENSBTAG00000009842"/>
<dbReference type="eggNOG" id="KOG3007">
    <property type="taxonomic scope" value="Eukaryota"/>
</dbReference>
<dbReference type="HOGENOM" id="CLU_042088_1_1_1"/>
<dbReference type="InParanoid" id="Q2KHX6"/>
<dbReference type="OMA" id="VKIVNVH"/>
<dbReference type="OrthoDB" id="41492at2759"/>
<dbReference type="TreeFam" id="TF105309"/>
<dbReference type="Reactome" id="R-BTA-71064">
    <property type="pathway name" value="Lysine catabolism"/>
</dbReference>
<dbReference type="Proteomes" id="UP000009136">
    <property type="component" value="Chromosome 25"/>
</dbReference>
<dbReference type="Bgee" id="ENSBTAG00000009842">
    <property type="expression patterns" value="Expressed in Ammon's horn and 91 other cell types or tissues"/>
</dbReference>
<dbReference type="GO" id="GO:0005737">
    <property type="term" value="C:cytoplasm"/>
    <property type="evidence" value="ECO:0000318"/>
    <property type="project" value="GO_Central"/>
</dbReference>
<dbReference type="GO" id="GO:0047127">
    <property type="term" value="F:thiomorpholine-carboxylate dehydrogenase activity"/>
    <property type="evidence" value="ECO:0007669"/>
    <property type="project" value="UniProtKB-EC"/>
</dbReference>
<dbReference type="GO" id="GO:0070324">
    <property type="term" value="F:thyroid hormone binding"/>
    <property type="evidence" value="ECO:0000318"/>
    <property type="project" value="GO_Central"/>
</dbReference>
<dbReference type="GO" id="GO:0042403">
    <property type="term" value="P:thyroid hormone metabolic process"/>
    <property type="evidence" value="ECO:0000318"/>
    <property type="project" value="GO_Central"/>
</dbReference>
<dbReference type="FunFam" id="3.30.1780.10:FF:000001">
    <property type="entry name" value="Ketimine reductase mu-crystallin"/>
    <property type="match status" value="1"/>
</dbReference>
<dbReference type="FunFam" id="3.40.50.720:FF:000241">
    <property type="entry name" value="ketimine reductase mu-crystallin"/>
    <property type="match status" value="1"/>
</dbReference>
<dbReference type="Gene3D" id="3.40.50.720">
    <property type="entry name" value="NAD(P)-binding Rossmann-like Domain"/>
    <property type="match status" value="1"/>
</dbReference>
<dbReference type="Gene3D" id="3.30.1780.10">
    <property type="entry name" value="ornithine cyclodeaminase, domain 1"/>
    <property type="match status" value="1"/>
</dbReference>
<dbReference type="InterPro" id="IPR036291">
    <property type="entry name" value="NAD(P)-bd_dom_sf"/>
</dbReference>
<dbReference type="InterPro" id="IPR003462">
    <property type="entry name" value="ODC_Mu_crystall"/>
</dbReference>
<dbReference type="InterPro" id="IPR023401">
    <property type="entry name" value="ODC_N"/>
</dbReference>
<dbReference type="PANTHER" id="PTHR13812">
    <property type="entry name" value="KETIMINE REDUCTASE MU-CRYSTALLIN"/>
    <property type="match status" value="1"/>
</dbReference>
<dbReference type="PANTHER" id="PTHR13812:SF19">
    <property type="entry name" value="KETIMINE REDUCTASE MU-CRYSTALLIN"/>
    <property type="match status" value="1"/>
</dbReference>
<dbReference type="Pfam" id="PF02423">
    <property type="entry name" value="OCD_Mu_crystall"/>
    <property type="match status" value="1"/>
</dbReference>
<dbReference type="PIRSF" id="PIRSF001439">
    <property type="entry name" value="CryM"/>
    <property type="match status" value="1"/>
</dbReference>
<dbReference type="SUPFAM" id="SSF51735">
    <property type="entry name" value="NAD(P)-binding Rossmann-fold domains"/>
    <property type="match status" value="1"/>
</dbReference>
<accession>Q2KHX6</accession>
<gene>
    <name type="primary">CRYM</name>
</gene>
<comment type="function">
    <text evidence="2 3">Catalyzes the NAD(P)H-dependent reduction of imine double bonds of a number of cyclic ketimine substrates, including sulfur-containing cyclic ketimines (PubMed:3191146). Under physiological conditions, it efficiently catalyzes delta(1)-piperideine-2-carboxylate (P2C) and delta(1)-pyrroline-2-carboxylate (Pyr2C) reduction, suggesting a central role in lysine and glutamate metabolism. Additional substrates are (S)-cystathionine ketimine (CysK), 3,4-dehydrothiomorpholine-3-carboxylate (AECK), and (R)-lanthionine ketimine (LK) that is reduced at very low rate compared to other substrates (PubMed:3191146). Also catalyzes the NAD(P)H-dependent reduction of delta(2)-thiazoline-2-carboxylate (T2C) (By similarity).</text>
</comment>
<comment type="catalytic activity">
    <reaction evidence="3">
        <text>L-pipecolate + NAD(+) = Delta(1)-piperideine-2-carboxylate + NADH + H(+)</text>
        <dbReference type="Rhea" id="RHEA:30807"/>
        <dbReference type="ChEBI" id="CHEBI:15378"/>
        <dbReference type="ChEBI" id="CHEBI:57540"/>
        <dbReference type="ChEBI" id="CHEBI:57945"/>
        <dbReference type="ChEBI" id="CHEBI:61185"/>
        <dbReference type="ChEBI" id="CHEBI:77631"/>
        <dbReference type="EC" id="1.5.1.1"/>
    </reaction>
    <physiologicalReaction direction="right-to-left" evidence="5">
        <dbReference type="Rhea" id="RHEA:30809"/>
    </physiologicalReaction>
</comment>
<comment type="catalytic activity">
    <reaction evidence="3">
        <text>L-pipecolate + NADP(+) = Delta(1)-piperideine-2-carboxylate + NADPH + H(+)</text>
        <dbReference type="Rhea" id="RHEA:12524"/>
        <dbReference type="ChEBI" id="CHEBI:15378"/>
        <dbReference type="ChEBI" id="CHEBI:57783"/>
        <dbReference type="ChEBI" id="CHEBI:58349"/>
        <dbReference type="ChEBI" id="CHEBI:61185"/>
        <dbReference type="ChEBI" id="CHEBI:77631"/>
        <dbReference type="EC" id="1.5.1.1"/>
    </reaction>
    <physiologicalReaction direction="right-to-left" evidence="5">
        <dbReference type="Rhea" id="RHEA:12526"/>
    </physiologicalReaction>
</comment>
<comment type="catalytic activity">
    <reaction evidence="2">
        <text>L-proline + NADP(+) = 1-pyrroline-2-carboxylate + NADPH + H(+)</text>
        <dbReference type="Rhea" id="RHEA:20317"/>
        <dbReference type="ChEBI" id="CHEBI:15378"/>
        <dbReference type="ChEBI" id="CHEBI:39785"/>
        <dbReference type="ChEBI" id="CHEBI:57783"/>
        <dbReference type="ChEBI" id="CHEBI:58349"/>
        <dbReference type="ChEBI" id="CHEBI:60039"/>
        <dbReference type="EC" id="1.5.1.1"/>
    </reaction>
    <physiologicalReaction direction="right-to-left" evidence="2">
        <dbReference type="Rhea" id="RHEA:20319"/>
    </physiologicalReaction>
</comment>
<comment type="catalytic activity">
    <reaction evidence="2">
        <text>L-proline + NAD(+) = 1-pyrroline-2-carboxylate + NADH + H(+)</text>
        <dbReference type="Rhea" id="RHEA:20321"/>
        <dbReference type="ChEBI" id="CHEBI:15378"/>
        <dbReference type="ChEBI" id="CHEBI:39785"/>
        <dbReference type="ChEBI" id="CHEBI:57540"/>
        <dbReference type="ChEBI" id="CHEBI:57945"/>
        <dbReference type="ChEBI" id="CHEBI:60039"/>
        <dbReference type="EC" id="1.5.1.1"/>
    </reaction>
    <physiologicalReaction direction="right-to-left" evidence="2">
        <dbReference type="Rhea" id="RHEA:20323"/>
    </physiologicalReaction>
</comment>
<comment type="catalytic activity">
    <reaction evidence="3">
        <text>(3R)-1,4-thiomorpholine-3-carboxylate + NAD(+) = 3,4-dehydrothiomorpholine-3-carboxylate + NADH + 2 H(+)</text>
        <dbReference type="Rhea" id="RHEA:12504"/>
        <dbReference type="ChEBI" id="CHEBI:15378"/>
        <dbReference type="ChEBI" id="CHEBI:57540"/>
        <dbReference type="ChEBI" id="CHEBI:57945"/>
        <dbReference type="ChEBI" id="CHEBI:58517"/>
        <dbReference type="ChEBI" id="CHEBI:176873"/>
        <dbReference type="EC" id="1.5.1.25"/>
    </reaction>
    <physiologicalReaction direction="right-to-left" evidence="5">
        <dbReference type="Rhea" id="RHEA:12506"/>
    </physiologicalReaction>
</comment>
<comment type="catalytic activity">
    <reaction evidence="3">
        <text>(3R)-1,4-thiomorpholine-3-carboxylate + NADP(+) = 3,4-dehydrothiomorpholine-3-carboxylate + NADPH + 2 H(+)</text>
        <dbReference type="Rhea" id="RHEA:12500"/>
        <dbReference type="ChEBI" id="CHEBI:15378"/>
        <dbReference type="ChEBI" id="CHEBI:57783"/>
        <dbReference type="ChEBI" id="CHEBI:58349"/>
        <dbReference type="ChEBI" id="CHEBI:58517"/>
        <dbReference type="ChEBI" id="CHEBI:176873"/>
        <dbReference type="EC" id="1.5.1.25"/>
    </reaction>
    <physiologicalReaction direction="right-to-left" evidence="5">
        <dbReference type="Rhea" id="RHEA:12502"/>
    </physiologicalReaction>
</comment>
<comment type="catalytic activity">
    <reaction evidence="3">
        <text>(S)-cystathionine ketimine + NADH + 2 H(+) = (3R,5S)-2,3,5,6,7-pentahydro-1,4-thiazepine-3,5-dicarboxylate + NAD(+)</text>
        <dbReference type="Rhea" id="RHEA:68032"/>
        <dbReference type="ChEBI" id="CHEBI:15378"/>
        <dbReference type="ChEBI" id="CHEBI:57540"/>
        <dbReference type="ChEBI" id="CHEBI:57945"/>
        <dbReference type="ChEBI" id="CHEBI:176808"/>
        <dbReference type="ChEBI" id="CHEBI:176810"/>
    </reaction>
    <physiologicalReaction direction="left-to-right" evidence="5">
        <dbReference type="Rhea" id="RHEA:68033"/>
    </physiologicalReaction>
</comment>
<comment type="catalytic activity">
    <reaction evidence="3">
        <text>(S)-cystathionine ketimine + NADPH + 2 H(+) = (3R,5S)-2,3,5,6,7-pentahydro-1,4-thiazepine-3,5-dicarboxylate + NADP(+)</text>
        <dbReference type="Rhea" id="RHEA:68036"/>
        <dbReference type="ChEBI" id="CHEBI:15378"/>
        <dbReference type="ChEBI" id="CHEBI:57783"/>
        <dbReference type="ChEBI" id="CHEBI:58349"/>
        <dbReference type="ChEBI" id="CHEBI:176808"/>
        <dbReference type="ChEBI" id="CHEBI:176810"/>
    </reaction>
    <physiologicalReaction direction="left-to-right" evidence="5">
        <dbReference type="Rhea" id="RHEA:68037"/>
    </physiologicalReaction>
</comment>
<comment type="catalytic activity">
    <reaction evidence="3">
        <text>(R)-lanthionine ketimine + NADPH + 2 H(+) = (3R,5R)-1,4-thiomorpholine-3,5-dicarboxylate + NADP(+)</text>
        <dbReference type="Rhea" id="RHEA:68040"/>
        <dbReference type="ChEBI" id="CHEBI:15378"/>
        <dbReference type="ChEBI" id="CHEBI:57783"/>
        <dbReference type="ChEBI" id="CHEBI:58349"/>
        <dbReference type="ChEBI" id="CHEBI:176891"/>
        <dbReference type="ChEBI" id="CHEBI:176892"/>
    </reaction>
    <physiologicalReaction direction="left-to-right" evidence="5">
        <dbReference type="Rhea" id="RHEA:68041"/>
    </physiologicalReaction>
</comment>
<comment type="catalytic activity">
    <reaction evidence="2">
        <text>Delta(2)-thiazoline-2-carboxylate + NADPH + 2 H(+) = L-thiazolidine-2-carboxylate + NADP(+)</text>
        <dbReference type="Rhea" id="RHEA:68072"/>
        <dbReference type="ChEBI" id="CHEBI:15378"/>
        <dbReference type="ChEBI" id="CHEBI:57783"/>
        <dbReference type="ChEBI" id="CHEBI:58349"/>
        <dbReference type="ChEBI" id="CHEBI:176895"/>
        <dbReference type="ChEBI" id="CHEBI:176896"/>
    </reaction>
    <physiologicalReaction direction="left-to-right" evidence="2">
        <dbReference type="Rhea" id="RHEA:68073"/>
    </physiologicalReaction>
</comment>
<comment type="biophysicochemical properties">
    <kinetics>
        <KM evidence="3">15 uM for NADPH (at pH 5.5 and 37 degrees Celsius)</KM>
        <KM evidence="3">260 uM for NADH (at pH 5.5 and 37 degrees Celsius)</KM>
        <KM evidence="3">240 uM for 3,4-dehydro-thiomorpholine-3-carboxylate (at pH 5.0 and 37 degrees Celsius)</KM>
        <KM evidence="3">330 uM for delta(1)-piperideine-2-carboxylate (at pH 5.0 and 37 degrees Celsius)</KM>
        <KM evidence="3">1.17 mM for (R)-lanthionine ketimine (at pH 5.0 and 37 degrees Celsius)</KM>
        <KM evidence="3">10 mM for (S)-cystathionine ketimine (at pH 5.0 and 37 degrees Celsius)</KM>
        <Vmax evidence="3">21.4 umol/min/mg enzyme toward 3,4-dehydro-thiomorpholine-3-carboxylate with NADH as cosubstrate (at pH 5.0 and 37 degrees Celsius)</Vmax>
        <Vmax evidence="3">52.0 umol/min/mg enzyme toward (S)-cystathionine ketimine with NADPH as cosubstrate (at pH 5.0 and 37 degrees Celsius)</Vmax>
        <Vmax evidence="3">2.2 umol/min/mg enzyme toward (R)-lanthionine ketimine with NADPH as cosubstrate (at pH 5.0 and 37 degrees Celsius)</Vmax>
        <Vmax evidence="3">32.7 umol/min/mg enzyme toward delta(1)-piperideine-2-carboxylate with NADPH as cosubstrate (at pH 5.0 and 37 degrees Celsius)</Vmax>
        <Vmax evidence="3">20.8 umol/min/mg enzyme toward NADPH with delta(1)-piperideine-2-carboxylate as cosubstrate (at pH 5.5 and 37 degrees Celsius)</Vmax>
        <Vmax evidence="3">149.0 umol/min/mg enzyme toward NADH with delta(1)-piperideine-2-carboxylate as cosubstrate (at pH 5.5 and 37 degrees Celsius)</Vmax>
    </kinetics>
    <phDependence>
        <text evidence="3">Optimum pH is 5.0 for the reduction of 3,4-dehydro-thiomorpholine-3-carboxylate at 37 degrees Celsius with NADH as cosubstrate, and for the reduction of (S)-cystathionine ketimine and delta(1)-piperideine-2-carboxylate at 37 degrees Celsius with NADPH as cosubstrate. Optimum pH is 4.5 for the reduction of (R)-lanthionine ketimine at 37 degrees Celsius with NADPH as cosubstrate.</text>
    </phDependence>
</comment>
<comment type="subunit">
    <text evidence="2 3">Homodimer (PubMed:3191146). Binds the thyroid hormone triiodothyronine (T3); T3 binding inhibits enzymatic activity (By similarity).</text>
</comment>
<comment type="subcellular location">
    <subcellularLocation>
        <location evidence="2">Cytoplasm</location>
    </subcellularLocation>
</comment>
<comment type="similarity">
    <text evidence="4">Belongs to the ornithine cyclodeaminase/mu-crystallin family.</text>
</comment>
<reference key="1">
    <citation type="submission" date="2006-01" db="EMBL/GenBank/DDBJ databases">
        <authorList>
            <consortium name="NIH - Mammalian Gene Collection (MGC) project"/>
        </authorList>
    </citation>
    <scope>NUCLEOTIDE SEQUENCE [LARGE SCALE MRNA]</scope>
    <source>
        <strain>Hereford</strain>
        <tissue>Hypothalamus</tissue>
    </source>
</reference>
<reference key="2">
    <citation type="journal article" date="1988" name="Biochim. Biophys. Acta">
        <title>Bovine brain ketimine reductase.</title>
        <authorList>
            <person name="Nardini M."/>
            <person name="Ricci G."/>
            <person name="Vesci L."/>
            <person name="Pecci L."/>
            <person name="Cavallini D."/>
        </authorList>
    </citation>
    <scope>FUNCTION</scope>
    <scope>CATALYTIC ACTIVITY</scope>
    <scope>BIOPHYSICOCHEMICAL PROPERTIES</scope>
    <scope>SUBUNIT</scope>
</reference>
<keyword id="KW-0963">Cytoplasm</keyword>
<keyword id="KW-0520">NAD</keyword>
<keyword id="KW-0521">NADP</keyword>
<keyword id="KW-0560">Oxidoreductase</keyword>
<keyword id="KW-1185">Reference proteome</keyword>
<proteinExistence type="evidence at protein level"/>
<name>CRYM_BOVIN</name>
<evidence type="ECO:0000250" key="1">
    <source>
        <dbReference type="UniProtKB" id="O54983"/>
    </source>
</evidence>
<evidence type="ECO:0000250" key="2">
    <source>
        <dbReference type="UniProtKB" id="Q14894"/>
    </source>
</evidence>
<evidence type="ECO:0000269" key="3">
    <source>
    </source>
</evidence>
<evidence type="ECO:0000305" key="4"/>
<evidence type="ECO:0000305" key="5">
    <source>
    </source>
</evidence>